<evidence type="ECO:0000255" key="1">
    <source>
        <dbReference type="HAMAP-Rule" id="MF_00195"/>
    </source>
</evidence>
<evidence type="ECO:0000256" key="2">
    <source>
        <dbReference type="SAM" id="MobiDB-lite"/>
    </source>
</evidence>
<dbReference type="EMBL" id="AE016853">
    <property type="protein sequence ID" value="AAO54959.1"/>
    <property type="molecule type" value="Genomic_DNA"/>
</dbReference>
<dbReference type="RefSeq" id="NP_791264.1">
    <property type="nucleotide sequence ID" value="NC_004578.1"/>
</dbReference>
<dbReference type="RefSeq" id="WP_003380618.1">
    <property type="nucleotide sequence ID" value="NC_004578.1"/>
</dbReference>
<dbReference type="SMR" id="Q886Y6"/>
<dbReference type="STRING" id="223283.PSPTO_1438"/>
<dbReference type="GeneID" id="61790070"/>
<dbReference type="KEGG" id="pst:PSPTO_1438"/>
<dbReference type="PATRIC" id="fig|223283.9.peg.1458"/>
<dbReference type="eggNOG" id="COG1160">
    <property type="taxonomic scope" value="Bacteria"/>
</dbReference>
<dbReference type="HOGENOM" id="CLU_016077_6_2_6"/>
<dbReference type="OrthoDB" id="9805918at2"/>
<dbReference type="PhylomeDB" id="Q886Y6"/>
<dbReference type="Proteomes" id="UP000002515">
    <property type="component" value="Chromosome"/>
</dbReference>
<dbReference type="GO" id="GO:0005525">
    <property type="term" value="F:GTP binding"/>
    <property type="evidence" value="ECO:0007669"/>
    <property type="project" value="UniProtKB-UniRule"/>
</dbReference>
<dbReference type="GO" id="GO:0043022">
    <property type="term" value="F:ribosome binding"/>
    <property type="evidence" value="ECO:0007669"/>
    <property type="project" value="TreeGrafter"/>
</dbReference>
<dbReference type="GO" id="GO:0042254">
    <property type="term" value="P:ribosome biogenesis"/>
    <property type="evidence" value="ECO:0007669"/>
    <property type="project" value="UniProtKB-KW"/>
</dbReference>
<dbReference type="CDD" id="cd01894">
    <property type="entry name" value="EngA1"/>
    <property type="match status" value="1"/>
</dbReference>
<dbReference type="CDD" id="cd01895">
    <property type="entry name" value="EngA2"/>
    <property type="match status" value="1"/>
</dbReference>
<dbReference type="FunFam" id="3.30.300.20:FF:000004">
    <property type="entry name" value="GTPase Der"/>
    <property type="match status" value="1"/>
</dbReference>
<dbReference type="FunFam" id="3.40.50.300:FF:000040">
    <property type="entry name" value="GTPase Der"/>
    <property type="match status" value="1"/>
</dbReference>
<dbReference type="FunFam" id="3.40.50.300:FF:000057">
    <property type="entry name" value="GTPase Der"/>
    <property type="match status" value="1"/>
</dbReference>
<dbReference type="Gene3D" id="3.30.300.20">
    <property type="match status" value="1"/>
</dbReference>
<dbReference type="Gene3D" id="3.40.50.300">
    <property type="entry name" value="P-loop containing nucleotide triphosphate hydrolases"/>
    <property type="match status" value="2"/>
</dbReference>
<dbReference type="HAMAP" id="MF_00195">
    <property type="entry name" value="GTPase_Der"/>
    <property type="match status" value="1"/>
</dbReference>
<dbReference type="InterPro" id="IPR031166">
    <property type="entry name" value="G_ENGA"/>
</dbReference>
<dbReference type="InterPro" id="IPR006073">
    <property type="entry name" value="GTP-bd"/>
</dbReference>
<dbReference type="InterPro" id="IPR016484">
    <property type="entry name" value="GTPase_Der"/>
</dbReference>
<dbReference type="InterPro" id="IPR032859">
    <property type="entry name" value="KH_dom-like"/>
</dbReference>
<dbReference type="InterPro" id="IPR015946">
    <property type="entry name" value="KH_dom-like_a/b"/>
</dbReference>
<dbReference type="InterPro" id="IPR027417">
    <property type="entry name" value="P-loop_NTPase"/>
</dbReference>
<dbReference type="InterPro" id="IPR005225">
    <property type="entry name" value="Small_GTP-bd"/>
</dbReference>
<dbReference type="NCBIfam" id="TIGR03594">
    <property type="entry name" value="GTPase_EngA"/>
    <property type="match status" value="1"/>
</dbReference>
<dbReference type="NCBIfam" id="TIGR00231">
    <property type="entry name" value="small_GTP"/>
    <property type="match status" value="2"/>
</dbReference>
<dbReference type="PANTHER" id="PTHR43834">
    <property type="entry name" value="GTPASE DER"/>
    <property type="match status" value="1"/>
</dbReference>
<dbReference type="PANTHER" id="PTHR43834:SF6">
    <property type="entry name" value="GTPASE DER"/>
    <property type="match status" value="1"/>
</dbReference>
<dbReference type="Pfam" id="PF14714">
    <property type="entry name" value="KH_dom-like"/>
    <property type="match status" value="1"/>
</dbReference>
<dbReference type="Pfam" id="PF01926">
    <property type="entry name" value="MMR_HSR1"/>
    <property type="match status" value="2"/>
</dbReference>
<dbReference type="PIRSF" id="PIRSF006485">
    <property type="entry name" value="GTP-binding_EngA"/>
    <property type="match status" value="1"/>
</dbReference>
<dbReference type="PRINTS" id="PR00326">
    <property type="entry name" value="GTP1OBG"/>
</dbReference>
<dbReference type="SUPFAM" id="SSF52540">
    <property type="entry name" value="P-loop containing nucleoside triphosphate hydrolases"/>
    <property type="match status" value="2"/>
</dbReference>
<dbReference type="PROSITE" id="PS51712">
    <property type="entry name" value="G_ENGA"/>
    <property type="match status" value="2"/>
</dbReference>
<keyword id="KW-0342">GTP-binding</keyword>
<keyword id="KW-0547">Nucleotide-binding</keyword>
<keyword id="KW-1185">Reference proteome</keyword>
<keyword id="KW-0677">Repeat</keyword>
<keyword id="KW-0690">Ribosome biogenesis</keyword>
<reference key="1">
    <citation type="journal article" date="2003" name="Proc. Natl. Acad. Sci. U.S.A.">
        <title>The complete genome sequence of the Arabidopsis and tomato pathogen Pseudomonas syringae pv. tomato DC3000.</title>
        <authorList>
            <person name="Buell C.R."/>
            <person name="Joardar V."/>
            <person name="Lindeberg M."/>
            <person name="Selengut J."/>
            <person name="Paulsen I.T."/>
            <person name="Gwinn M.L."/>
            <person name="Dodson R.J."/>
            <person name="DeBoy R.T."/>
            <person name="Durkin A.S."/>
            <person name="Kolonay J.F."/>
            <person name="Madupu R."/>
            <person name="Daugherty S.C."/>
            <person name="Brinkac L.M."/>
            <person name="Beanan M.J."/>
            <person name="Haft D.H."/>
            <person name="Nelson W.C."/>
            <person name="Davidsen T.M."/>
            <person name="Zafar N."/>
            <person name="Zhou L."/>
            <person name="Liu J."/>
            <person name="Yuan Q."/>
            <person name="Khouri H.M."/>
            <person name="Fedorova N.B."/>
            <person name="Tran B."/>
            <person name="Russell D."/>
            <person name="Berry K.J."/>
            <person name="Utterback T.R."/>
            <person name="Van Aken S.E."/>
            <person name="Feldblyum T.V."/>
            <person name="D'Ascenzo M."/>
            <person name="Deng W.-L."/>
            <person name="Ramos A.R."/>
            <person name="Alfano J.R."/>
            <person name="Cartinhour S."/>
            <person name="Chatterjee A.K."/>
            <person name="Delaney T.P."/>
            <person name="Lazarowitz S.G."/>
            <person name="Martin G.B."/>
            <person name="Schneider D.J."/>
            <person name="Tang X."/>
            <person name="Bender C.L."/>
            <person name="White O."/>
            <person name="Fraser C.M."/>
            <person name="Collmer A."/>
        </authorList>
    </citation>
    <scope>NUCLEOTIDE SEQUENCE [LARGE SCALE GENOMIC DNA]</scope>
    <source>
        <strain>ATCC BAA-871 / DC3000</strain>
    </source>
</reference>
<comment type="function">
    <text evidence="1">GTPase that plays an essential role in the late steps of ribosome biogenesis.</text>
</comment>
<comment type="subunit">
    <text evidence="1">Associates with the 50S ribosomal subunit.</text>
</comment>
<comment type="similarity">
    <text evidence="1">Belongs to the TRAFAC class TrmE-Era-EngA-EngB-Septin-like GTPase superfamily. EngA (Der) GTPase family.</text>
</comment>
<feature type="chain" id="PRO_0000179032" description="GTPase Der">
    <location>
        <begin position="1"/>
        <end position="489"/>
    </location>
</feature>
<feature type="domain" description="EngA-type G 1">
    <location>
        <begin position="3"/>
        <end position="166"/>
    </location>
</feature>
<feature type="domain" description="EngA-type G 2">
    <location>
        <begin position="195"/>
        <end position="368"/>
    </location>
</feature>
<feature type="domain" description="KH-like" evidence="1">
    <location>
        <begin position="369"/>
        <end position="453"/>
    </location>
</feature>
<feature type="region of interest" description="Disordered" evidence="2">
    <location>
        <begin position="451"/>
        <end position="489"/>
    </location>
</feature>
<feature type="compositionally biased region" description="Basic residues" evidence="2">
    <location>
        <begin position="469"/>
        <end position="489"/>
    </location>
</feature>
<feature type="binding site" evidence="1">
    <location>
        <begin position="9"/>
        <end position="16"/>
    </location>
    <ligand>
        <name>GTP</name>
        <dbReference type="ChEBI" id="CHEBI:37565"/>
        <label>1</label>
    </ligand>
</feature>
<feature type="binding site" evidence="1">
    <location>
        <begin position="56"/>
        <end position="60"/>
    </location>
    <ligand>
        <name>GTP</name>
        <dbReference type="ChEBI" id="CHEBI:37565"/>
        <label>1</label>
    </ligand>
</feature>
<feature type="binding site" evidence="1">
    <location>
        <begin position="118"/>
        <end position="121"/>
    </location>
    <ligand>
        <name>GTP</name>
        <dbReference type="ChEBI" id="CHEBI:37565"/>
        <label>1</label>
    </ligand>
</feature>
<feature type="binding site" evidence="1">
    <location>
        <begin position="201"/>
        <end position="208"/>
    </location>
    <ligand>
        <name>GTP</name>
        <dbReference type="ChEBI" id="CHEBI:37565"/>
        <label>2</label>
    </ligand>
</feature>
<feature type="binding site" evidence="1">
    <location>
        <begin position="248"/>
        <end position="252"/>
    </location>
    <ligand>
        <name>GTP</name>
        <dbReference type="ChEBI" id="CHEBI:37565"/>
        <label>2</label>
    </ligand>
</feature>
<feature type="binding site" evidence="1">
    <location>
        <begin position="313"/>
        <end position="316"/>
    </location>
    <ligand>
        <name>GTP</name>
        <dbReference type="ChEBI" id="CHEBI:37565"/>
        <label>2</label>
    </ligand>
</feature>
<proteinExistence type="inferred from homology"/>
<protein>
    <recommendedName>
        <fullName evidence="1">GTPase Der</fullName>
    </recommendedName>
    <alternativeName>
        <fullName evidence="1">GTP-binding protein EngA</fullName>
    </alternativeName>
</protein>
<organism>
    <name type="scientific">Pseudomonas syringae pv. tomato (strain ATCC BAA-871 / DC3000)</name>
    <dbReference type="NCBI Taxonomy" id="223283"/>
    <lineage>
        <taxon>Bacteria</taxon>
        <taxon>Pseudomonadati</taxon>
        <taxon>Pseudomonadota</taxon>
        <taxon>Gammaproteobacteria</taxon>
        <taxon>Pseudomonadales</taxon>
        <taxon>Pseudomonadaceae</taxon>
        <taxon>Pseudomonas</taxon>
    </lineage>
</organism>
<name>DER_PSESM</name>
<sequence>MVPVIALVGRPNVGKSTMFNRLTRTRDAIVGDLSGLTRDRQYGEAKWQGRSYILIDTGGISGDEHGMDEKMAEQSLLAIEEADVVLFLVDARAGYTAADQMIGEHLRKRNKRSYVVANKIDNIDENLARAEFSPMGLGDAIPVAGAHGRGISQMLEIALREFPKDEDELEEGEVEEVAEGQEAKRIPGPSEKDGIKIAIIGRPNVGKSTLVNRMLGEDRVIVYDEPGTTRDSIYIPFERNEEKYTLIDTAGVRKRGKIHEEVEKFSVVKTLQAIKDANVVIFVMDAREGVVDHDLNLLGFALEAGRALVIALNKWDGMTPGERDFVKIELERRLFFVDFADIHFISALHGTGVGNLYQSVQNSFKSAVTRWPTSRLTQILEDAVSEHAPPMVGSRRIKLRYAHLGGANPPLIVIHGNQVEKVPKSYVRYLENTYRRVLKLVGTPIRIEFKGGENPYEGNKNTLTDRQVNKKRRMMSHHKKADKKRRDKR</sequence>
<accession>Q886Y6</accession>
<gene>
    <name evidence="1" type="primary">der</name>
    <name type="synonym">engA</name>
    <name type="ordered locus">PSPTO_1438</name>
</gene>